<name>Y211_AQUAE</name>
<keyword id="KW-0002">3D-structure</keyword>
<keyword id="KW-0349">Heme</keyword>
<keyword id="KW-0408">Iron</keyword>
<keyword id="KW-0479">Metal-binding</keyword>
<keyword id="KW-0561">Oxygen transport</keyword>
<keyword id="KW-1185">Reference proteome</keyword>
<keyword id="KW-0813">Transport</keyword>
<gene>
    <name type="ordered locus">aq_211</name>
</gene>
<protein>
    <recommendedName>
        <fullName>Uncharacterized globin-like protein aq_211</fullName>
    </recommendedName>
</protein>
<accession>O66586</accession>
<proteinExistence type="evidence at protein level"/>
<sequence length="139" mass="15964">MLSEETIRVIKSTVPLLKEHGTEITARMYELLFSKYPKTKELFAGASEEQPKKLANAIIAYATYIDRLEELDNAISTIARSHVRRNVKPEHYPLVKECLLQAIEEVLNPGEEVLKAWEEAYDFLAKTLITLEKKLYSQP</sequence>
<comment type="similarity">
    <text evidence="1">Belongs to the globin family.</text>
</comment>
<evidence type="ECO:0000255" key="1">
    <source>
        <dbReference type="PROSITE-ProRule" id="PRU00238"/>
    </source>
</evidence>
<evidence type="ECO:0007829" key="2">
    <source>
        <dbReference type="PDB" id="7DIH"/>
    </source>
</evidence>
<feature type="chain" id="PRO_0000052457" description="Uncharacterized globin-like protein aq_211">
    <location>
        <begin position="1"/>
        <end position="139"/>
    </location>
</feature>
<feature type="domain" description="Globin" evidence="1">
    <location>
        <begin position="1"/>
        <end position="133"/>
    </location>
</feature>
<feature type="helix" evidence="2">
    <location>
        <begin position="4"/>
        <end position="12"/>
    </location>
</feature>
<feature type="helix" evidence="2">
    <location>
        <begin position="14"/>
        <end position="35"/>
    </location>
</feature>
<feature type="helix" evidence="2">
    <location>
        <begin position="37"/>
        <end position="39"/>
    </location>
</feature>
<feature type="helix" evidence="2">
    <location>
        <begin position="40"/>
        <end position="43"/>
    </location>
</feature>
<feature type="helix" evidence="2">
    <location>
        <begin position="50"/>
        <end position="63"/>
    </location>
</feature>
<feature type="turn" evidence="2">
    <location>
        <begin position="64"/>
        <end position="66"/>
    </location>
</feature>
<feature type="helix" evidence="2">
    <location>
        <begin position="68"/>
        <end position="71"/>
    </location>
</feature>
<feature type="helix" evidence="2">
    <location>
        <begin position="72"/>
        <end position="84"/>
    </location>
</feature>
<feature type="helix" evidence="2">
    <location>
        <begin position="89"/>
        <end position="91"/>
    </location>
</feature>
<feature type="helix" evidence="2">
    <location>
        <begin position="92"/>
        <end position="107"/>
    </location>
</feature>
<feature type="helix" evidence="2">
    <location>
        <begin position="111"/>
        <end position="136"/>
    </location>
</feature>
<reference key="1">
    <citation type="journal article" date="1998" name="Nature">
        <title>The complete genome of the hyperthermophilic bacterium Aquifex aeolicus.</title>
        <authorList>
            <person name="Deckert G."/>
            <person name="Warren P.V."/>
            <person name="Gaasterland T."/>
            <person name="Young W.G."/>
            <person name="Lenox A.L."/>
            <person name="Graham D.E."/>
            <person name="Overbeek R."/>
            <person name="Snead M.A."/>
            <person name="Keller M."/>
            <person name="Aujay M."/>
            <person name="Huber R."/>
            <person name="Feldman R.A."/>
            <person name="Short J.M."/>
            <person name="Olsen G.J."/>
            <person name="Swanson R.V."/>
        </authorList>
    </citation>
    <scope>NUCLEOTIDE SEQUENCE [LARGE SCALE GENOMIC DNA]</scope>
    <source>
        <strain>VF5</strain>
    </source>
</reference>
<dbReference type="EMBL" id="AE000657">
    <property type="protein sequence ID" value="AAC06544.1"/>
    <property type="molecule type" value="Genomic_DNA"/>
</dbReference>
<dbReference type="PIR" id="F70319">
    <property type="entry name" value="F70319"/>
</dbReference>
<dbReference type="RefSeq" id="NP_213146.1">
    <property type="nucleotide sequence ID" value="NC_000918.1"/>
</dbReference>
<dbReference type="RefSeq" id="WP_010880084.1">
    <property type="nucleotide sequence ID" value="NC_000918.1"/>
</dbReference>
<dbReference type="PDB" id="7DIH">
    <property type="method" value="X-ray"/>
    <property type="resolution" value="1.50 A"/>
    <property type="chains" value="A/B=1-139"/>
</dbReference>
<dbReference type="PDBsum" id="7DIH"/>
<dbReference type="SMR" id="O66586"/>
<dbReference type="STRING" id="224324.aq_211"/>
<dbReference type="EnsemblBacteria" id="AAC06544">
    <property type="protein sequence ID" value="AAC06544"/>
    <property type="gene ID" value="aq_211"/>
</dbReference>
<dbReference type="KEGG" id="aae:aq_211"/>
<dbReference type="eggNOG" id="COG1017">
    <property type="taxonomic scope" value="Bacteria"/>
</dbReference>
<dbReference type="HOGENOM" id="CLU_003827_13_2_0"/>
<dbReference type="InParanoid" id="O66586"/>
<dbReference type="OrthoDB" id="510157at2"/>
<dbReference type="Proteomes" id="UP000000798">
    <property type="component" value="Chromosome"/>
</dbReference>
<dbReference type="GO" id="GO:0020037">
    <property type="term" value="F:heme binding"/>
    <property type="evidence" value="ECO:0007669"/>
    <property type="project" value="InterPro"/>
</dbReference>
<dbReference type="GO" id="GO:0046872">
    <property type="term" value="F:metal ion binding"/>
    <property type="evidence" value="ECO:0007669"/>
    <property type="project" value="UniProtKB-KW"/>
</dbReference>
<dbReference type="GO" id="GO:0019825">
    <property type="term" value="F:oxygen binding"/>
    <property type="evidence" value="ECO:0007669"/>
    <property type="project" value="InterPro"/>
</dbReference>
<dbReference type="GO" id="GO:0005344">
    <property type="term" value="F:oxygen carrier activity"/>
    <property type="evidence" value="ECO:0007669"/>
    <property type="project" value="UniProtKB-KW"/>
</dbReference>
<dbReference type="CDD" id="cd08922">
    <property type="entry name" value="FHb-globin"/>
    <property type="match status" value="1"/>
</dbReference>
<dbReference type="FunFam" id="1.10.490.10:FF:000003">
    <property type="entry name" value="Flavohemoprotein"/>
    <property type="match status" value="1"/>
</dbReference>
<dbReference type="Gene3D" id="1.10.490.10">
    <property type="entry name" value="Globins"/>
    <property type="match status" value="1"/>
</dbReference>
<dbReference type="InterPro" id="IPR000971">
    <property type="entry name" value="Globin"/>
</dbReference>
<dbReference type="InterPro" id="IPR009050">
    <property type="entry name" value="Globin-like_sf"/>
</dbReference>
<dbReference type="InterPro" id="IPR012292">
    <property type="entry name" value="Globin/Proto"/>
</dbReference>
<dbReference type="PANTHER" id="PTHR43396">
    <property type="entry name" value="FLAVOHEMOPROTEIN"/>
    <property type="match status" value="1"/>
</dbReference>
<dbReference type="PANTHER" id="PTHR43396:SF3">
    <property type="entry name" value="FLAVOHEMOPROTEIN"/>
    <property type="match status" value="1"/>
</dbReference>
<dbReference type="Pfam" id="PF00042">
    <property type="entry name" value="Globin"/>
    <property type="match status" value="1"/>
</dbReference>
<dbReference type="SUPFAM" id="SSF46458">
    <property type="entry name" value="Globin-like"/>
    <property type="match status" value="1"/>
</dbReference>
<dbReference type="PROSITE" id="PS01033">
    <property type="entry name" value="GLOBIN"/>
    <property type="match status" value="1"/>
</dbReference>
<organism>
    <name type="scientific">Aquifex aeolicus (strain VF5)</name>
    <dbReference type="NCBI Taxonomy" id="224324"/>
    <lineage>
        <taxon>Bacteria</taxon>
        <taxon>Pseudomonadati</taxon>
        <taxon>Aquificota</taxon>
        <taxon>Aquificia</taxon>
        <taxon>Aquificales</taxon>
        <taxon>Aquificaceae</taxon>
        <taxon>Aquifex</taxon>
    </lineage>
</organism>